<keyword id="KW-0002">3D-structure</keyword>
<keyword id="KW-0966">Cell projection</keyword>
<keyword id="KW-0963">Cytoplasm</keyword>
<keyword id="KW-0206">Cytoskeleton</keyword>
<keyword id="KW-0256">Endoplasmic reticulum</keyword>
<keyword id="KW-0880">Kelch repeat</keyword>
<keyword id="KW-0472">Membrane</keyword>
<keyword id="KW-0597">Phosphoprotein</keyword>
<keyword id="KW-1185">Reference proteome</keyword>
<keyword id="KW-0677">Repeat</keyword>
<keyword id="KW-0703">Sarcoplasmic reticulum</keyword>
<keyword id="KW-0832">Ubl conjugation</keyword>
<accession>Q9ER30</accession>
<reference key="1">
    <citation type="journal article" date="2000" name="Oncogene">
        <title>Krp1, a novel kelch related protein that is involved in pseudopod elongation in transformed cells.</title>
        <authorList>
            <person name="Spence H.J."/>
            <person name="Johnston I.P."/>
            <person name="Ewart K."/>
            <person name="Buchanan S.J."/>
            <person name="Fitzgerald U."/>
            <person name="Ozanne B.W."/>
        </authorList>
    </citation>
    <scope>NUCLEOTIDE SEQUENCE [MRNA]</scope>
    <scope>FUNCTION</scope>
    <scope>SUBCELLULAR LOCATION</scope>
    <source>
        <tissue>Fibroblast</tissue>
    </source>
</reference>
<reference key="2">
    <citation type="journal article" date="2003" name="J. Cell Sci.">
        <title>New N-RAP-binding partners alpha-actinin, filamin and Krp1 detected by yeast two-hybrid screening: implications for myofibril assembly.</title>
        <authorList>
            <person name="Lu S."/>
            <person name="Carroll S.L."/>
            <person name="Herrera A.H."/>
            <person name="Ozanne B."/>
            <person name="Horowits R."/>
        </authorList>
    </citation>
    <scope>INTERACTION WITH NRAP</scope>
</reference>
<reference key="3">
    <citation type="journal article" date="2012" name="Nat. Commun.">
        <title>Quantitative maps of protein phosphorylation sites across 14 different rat organs and tissues.</title>
        <authorList>
            <person name="Lundby A."/>
            <person name="Secher A."/>
            <person name="Lage K."/>
            <person name="Nordsborg N.B."/>
            <person name="Dmytriyev A."/>
            <person name="Lundby C."/>
            <person name="Olsen J.V."/>
        </authorList>
    </citation>
    <scope>PHOSPHORYLATION [LARGE SCALE ANALYSIS] AT SER-3</scope>
    <scope>IDENTIFICATION BY MASS SPECTROMETRY [LARGE SCALE ANALYSIS]</scope>
</reference>
<reference key="4">
    <citation type="journal article" date="2009" name="J. Biol. Chem.">
        <title>Novel beta-propeller of the BTB-Kelch protein Krp1 provides a binding site for Lasp-1 that is necessary for pseudopodial extension.</title>
        <authorList>
            <person name="Gray C.H."/>
            <person name="McGarry L.C."/>
            <person name="Spence H.J."/>
            <person name="Riboldi-Tunnicliffe A."/>
            <person name="Ozanne B.W."/>
        </authorList>
    </citation>
    <scope>X-RAY CRYSTALLOGRAPHY (2.0 ANGSTROMS) OF 289-606</scope>
    <scope>INTERACTION WITH LASP1</scope>
</reference>
<comment type="function">
    <text evidence="2 5">Involved in skeletal muscle development and differentiation. Regulates proliferation and differentiation of myoblasts and plays a role in myofibril assembly by promoting lateral fusion of adjacent thin fibrils into mature, wide myofibrils. Required for pseudopod elongation in transformed cells.</text>
</comment>
<comment type="subunit">
    <text evidence="1 6 7">Interacts with NRAP. Part of a complex that contains CUL3, RBX1 and KLHL41. Interacts with LASP1.</text>
</comment>
<comment type="subcellular location">
    <subcellularLocation>
        <location evidence="5">Cytoplasm</location>
    </subcellularLocation>
    <subcellularLocation>
        <location evidence="5">Cytoplasm</location>
        <location evidence="5">Cytoskeleton</location>
    </subcellularLocation>
    <subcellularLocation>
        <location evidence="5">Cell projection</location>
        <location evidence="5">Pseudopodium</location>
    </subcellularLocation>
    <subcellularLocation>
        <location evidence="5">Cell projection</location>
        <location evidence="5">Ruffle</location>
    </subcellularLocation>
    <subcellularLocation>
        <location evidence="2">Cytoplasm</location>
        <location evidence="2">Myofibril</location>
        <location evidence="2">Sarcomere</location>
        <location evidence="2">M line</location>
    </subcellularLocation>
    <subcellularLocation>
        <location evidence="3">Sarcoplasmic reticulum membrane</location>
    </subcellularLocation>
    <subcellularLocation>
        <location evidence="3">Endoplasmic reticulum membrane</location>
    </subcellularLocation>
    <text>Predominantly cytoplasmic but can colocalize with F-actin at the membrane ruffle-like structures at the tips of transformation-specific pseudopodia.</text>
</comment>
<comment type="tissue specificity">
    <text>Primarily expressed in skeletal muscle. Also found in heart and lung.</text>
</comment>
<comment type="PTM">
    <text evidence="3">Ubiquitinated by E3 ubiquitin ligase complex formed by CUL3 and RBX1 and probably targeted for proteasome-independent degradation. Quinone-induced oxidative stress increases its ubiquitination.</text>
</comment>
<sequence>MDSQRELAEELRLYQSTLLQDGLKDLLEEKKFIDCTLKAGDKSFPCHRLILSACSPYFREYFLSEIEEEKKKEMALDNVDPAILDLIIKYLYSASIDLNDGNVQDIFALSSRFQIPSVFTVCVSYLQKRLAPGNCLAILRLGLLLDCPRLAISAREFVSDRFVQICKEEDFMQLSPQELISVISNDSLNVEKEEVVFEAVMKWVRTDKENRAKNLSEVFDCIRFRLMAEKYFKDHVEKDDIIKSNPEVQKKIKVLKDAFAGKLPEPSKSAEKGGTGEVNGDVGDEDLLPGYLNDIPRHGMFVKDLILLVNDTAAVAYDPMENECYLTALAEQIPRNHSSIVTQQNQVYVVGGLYVDEENKDQPLQSYFFQLDNVSSEWVGLPPLPSARCLFGLGEVDDKIYVVAGKDLQTEASLDSVLCYDPVAAKWSEVKNLPIKVYGHNVISHNGMIYCLGGKTDDKKCTNRVFIYNPKKGDWKDLAPMKTPRSMFGVAIHKGKIVIAGGVTEDGLSASVEAFDLKTNKWEVMTEFPQERSSISLVSLAGSLYAIGGFAMIQLESKEFAPTEVNDIWKYEDDKKEWAGMLKEIRYASGASCLATRLNLFKLSKL</sequence>
<evidence type="ECO:0000250" key="1"/>
<evidence type="ECO:0000250" key="2">
    <source>
        <dbReference type="UniProtKB" id="A2AUC9"/>
    </source>
</evidence>
<evidence type="ECO:0000250" key="3">
    <source>
        <dbReference type="UniProtKB" id="O60662"/>
    </source>
</evidence>
<evidence type="ECO:0000255" key="4">
    <source>
        <dbReference type="PROSITE-ProRule" id="PRU00037"/>
    </source>
</evidence>
<evidence type="ECO:0000269" key="5">
    <source>
    </source>
</evidence>
<evidence type="ECO:0000269" key="6">
    <source>
    </source>
</evidence>
<evidence type="ECO:0000269" key="7">
    <source>
    </source>
</evidence>
<evidence type="ECO:0007744" key="8">
    <source>
    </source>
</evidence>
<evidence type="ECO:0007829" key="9">
    <source>
        <dbReference type="PDB" id="2WOZ"/>
    </source>
</evidence>
<proteinExistence type="evidence at protein level"/>
<organism>
    <name type="scientific">Rattus norvegicus</name>
    <name type="common">Rat</name>
    <dbReference type="NCBI Taxonomy" id="10116"/>
    <lineage>
        <taxon>Eukaryota</taxon>
        <taxon>Metazoa</taxon>
        <taxon>Chordata</taxon>
        <taxon>Craniata</taxon>
        <taxon>Vertebrata</taxon>
        <taxon>Euteleostomi</taxon>
        <taxon>Mammalia</taxon>
        <taxon>Eutheria</taxon>
        <taxon>Euarchontoglires</taxon>
        <taxon>Glires</taxon>
        <taxon>Rodentia</taxon>
        <taxon>Myomorpha</taxon>
        <taxon>Muroidea</taxon>
        <taxon>Muridae</taxon>
        <taxon>Murinae</taxon>
        <taxon>Rattus</taxon>
    </lineage>
</organism>
<protein>
    <recommendedName>
        <fullName>Kelch-like protein 41</fullName>
    </recommendedName>
    <alternativeName>
        <fullName>Kel-like protein 23</fullName>
    </alternativeName>
    <alternativeName>
        <fullName>Kelch repeat and BTB domain-containing protein 10</fullName>
    </alternativeName>
    <alternativeName>
        <fullName>Kelch-related protein 1</fullName>
    </alternativeName>
    <alternativeName>
        <fullName>Sarcosin</fullName>
    </alternativeName>
</protein>
<dbReference type="EMBL" id="AJ293948">
    <property type="protein sequence ID" value="CAC08185.1"/>
    <property type="molecule type" value="mRNA"/>
</dbReference>
<dbReference type="RefSeq" id="NP_476539.1">
    <property type="nucleotide sequence ID" value="NM_057191.2"/>
</dbReference>
<dbReference type="PDB" id="2WOZ">
    <property type="method" value="X-ray"/>
    <property type="resolution" value="2.00 A"/>
    <property type="chains" value="A=289-606"/>
</dbReference>
<dbReference type="PDBsum" id="2WOZ"/>
<dbReference type="SMR" id="Q9ER30"/>
<dbReference type="FunCoup" id="Q9ER30">
    <property type="interactions" value="91"/>
</dbReference>
<dbReference type="IntAct" id="Q9ER30">
    <property type="interactions" value="2"/>
</dbReference>
<dbReference type="STRING" id="10116.ENSRNOP00000009969"/>
<dbReference type="iPTMnet" id="Q9ER30"/>
<dbReference type="PhosphoSitePlus" id="Q9ER30"/>
<dbReference type="PaxDb" id="10116-ENSRNOP00000009969"/>
<dbReference type="Ensembl" id="ENSRNOT00000009969.4">
    <property type="protein sequence ID" value="ENSRNOP00000009969.2"/>
    <property type="gene ID" value="ENSRNOG00000007461.4"/>
</dbReference>
<dbReference type="GeneID" id="117537"/>
<dbReference type="KEGG" id="rno:117537"/>
<dbReference type="UCSC" id="RGD:620852">
    <property type="organism name" value="rat"/>
</dbReference>
<dbReference type="AGR" id="RGD:620852"/>
<dbReference type="CTD" id="10324"/>
<dbReference type="RGD" id="620852">
    <property type="gene designation" value="Klhl41"/>
</dbReference>
<dbReference type="eggNOG" id="KOG4441">
    <property type="taxonomic scope" value="Eukaryota"/>
</dbReference>
<dbReference type="GeneTree" id="ENSGT00940000158859"/>
<dbReference type="HOGENOM" id="CLU_004253_14_4_1"/>
<dbReference type="InParanoid" id="Q9ER30"/>
<dbReference type="OMA" id="FQSYFFQ"/>
<dbReference type="OrthoDB" id="6359816at2759"/>
<dbReference type="PhylomeDB" id="Q9ER30"/>
<dbReference type="TreeFam" id="TF351653"/>
<dbReference type="Reactome" id="R-RNO-8951664">
    <property type="pathway name" value="Neddylation"/>
</dbReference>
<dbReference type="Reactome" id="R-RNO-983168">
    <property type="pathway name" value="Antigen processing: Ubiquitination &amp; Proteasome degradation"/>
</dbReference>
<dbReference type="EvolutionaryTrace" id="Q9ER30"/>
<dbReference type="PRO" id="PR:Q9ER30"/>
<dbReference type="Proteomes" id="UP000002494">
    <property type="component" value="Chromosome 3"/>
</dbReference>
<dbReference type="Bgee" id="ENSRNOG00000007461">
    <property type="expression patterns" value="Expressed in skeletal muscle tissue and 14 other cell types or tissues"/>
</dbReference>
<dbReference type="GO" id="GO:0031463">
    <property type="term" value="C:Cul3-RING ubiquitin ligase complex"/>
    <property type="evidence" value="ECO:0000266"/>
    <property type="project" value="RGD"/>
</dbReference>
<dbReference type="GO" id="GO:0005737">
    <property type="term" value="C:cytoplasm"/>
    <property type="evidence" value="ECO:0000266"/>
    <property type="project" value="RGD"/>
</dbReference>
<dbReference type="GO" id="GO:0005856">
    <property type="term" value="C:cytoskeleton"/>
    <property type="evidence" value="ECO:0000250"/>
    <property type="project" value="UniProtKB"/>
</dbReference>
<dbReference type="GO" id="GO:0005789">
    <property type="term" value="C:endoplasmic reticulum membrane"/>
    <property type="evidence" value="ECO:0000250"/>
    <property type="project" value="UniProtKB"/>
</dbReference>
<dbReference type="GO" id="GO:0031430">
    <property type="term" value="C:M band"/>
    <property type="evidence" value="ECO:0000250"/>
    <property type="project" value="UniProtKB"/>
</dbReference>
<dbReference type="GO" id="GO:0031143">
    <property type="term" value="C:pseudopodium"/>
    <property type="evidence" value="ECO:0000314"/>
    <property type="project" value="RGD"/>
</dbReference>
<dbReference type="GO" id="GO:0001726">
    <property type="term" value="C:ruffle"/>
    <property type="evidence" value="ECO:0007669"/>
    <property type="project" value="UniProtKB-SubCell"/>
</dbReference>
<dbReference type="GO" id="GO:0033017">
    <property type="term" value="C:sarcoplasmic reticulum membrane"/>
    <property type="evidence" value="ECO:0000250"/>
    <property type="project" value="UniProtKB"/>
</dbReference>
<dbReference type="GO" id="GO:1990756">
    <property type="term" value="F:ubiquitin-like ligase-substrate adaptor activity"/>
    <property type="evidence" value="ECO:0000318"/>
    <property type="project" value="GO_Central"/>
</dbReference>
<dbReference type="GO" id="GO:0030239">
    <property type="term" value="P:myofibril assembly"/>
    <property type="evidence" value="ECO:0000250"/>
    <property type="project" value="UniProtKB"/>
</dbReference>
<dbReference type="GO" id="GO:0043161">
    <property type="term" value="P:proteasome-mediated ubiquitin-dependent protein catabolic process"/>
    <property type="evidence" value="ECO:0000318"/>
    <property type="project" value="GO_Central"/>
</dbReference>
<dbReference type="GO" id="GO:0016567">
    <property type="term" value="P:protein ubiquitination"/>
    <property type="evidence" value="ECO:0000266"/>
    <property type="project" value="RGD"/>
</dbReference>
<dbReference type="GO" id="GO:0031269">
    <property type="term" value="P:pseudopodium assembly"/>
    <property type="evidence" value="ECO:0000315"/>
    <property type="project" value="RGD"/>
</dbReference>
<dbReference type="GO" id="GO:0045661">
    <property type="term" value="P:regulation of myoblast differentiation"/>
    <property type="evidence" value="ECO:0000250"/>
    <property type="project" value="UniProtKB"/>
</dbReference>
<dbReference type="GO" id="GO:2000291">
    <property type="term" value="P:regulation of myoblast proliferation"/>
    <property type="evidence" value="ECO:0000250"/>
    <property type="project" value="UniProtKB"/>
</dbReference>
<dbReference type="GO" id="GO:2001014">
    <property type="term" value="P:regulation of skeletal muscle cell differentiation"/>
    <property type="evidence" value="ECO:0000266"/>
    <property type="project" value="RGD"/>
</dbReference>
<dbReference type="GO" id="GO:0035914">
    <property type="term" value="P:skeletal muscle cell differentiation"/>
    <property type="evidence" value="ECO:0000250"/>
    <property type="project" value="UniProtKB"/>
</dbReference>
<dbReference type="CDD" id="cd18517">
    <property type="entry name" value="BACK_KLHL41_KBTBD10"/>
    <property type="match status" value="1"/>
</dbReference>
<dbReference type="CDD" id="cd18341">
    <property type="entry name" value="BTB_POZ_KLHL41_KBTBD10"/>
    <property type="match status" value="1"/>
</dbReference>
<dbReference type="FunFam" id="3.30.710.10:FF:000006">
    <property type="entry name" value="Kelch repeat and BTB domain-containing 6"/>
    <property type="match status" value="1"/>
</dbReference>
<dbReference type="FunFam" id="1.25.40.420:FF:000001">
    <property type="entry name" value="Kelch-like family member 12"/>
    <property type="match status" value="1"/>
</dbReference>
<dbReference type="FunFam" id="2.120.10.80:FF:000025">
    <property type="entry name" value="Kelch-like family member 41"/>
    <property type="match status" value="1"/>
</dbReference>
<dbReference type="Gene3D" id="1.25.40.420">
    <property type="match status" value="1"/>
</dbReference>
<dbReference type="Gene3D" id="2.120.10.80">
    <property type="entry name" value="Kelch-type beta propeller"/>
    <property type="match status" value="1"/>
</dbReference>
<dbReference type="Gene3D" id="3.30.710.10">
    <property type="entry name" value="Potassium Channel Kv1.1, Chain A"/>
    <property type="match status" value="1"/>
</dbReference>
<dbReference type="InterPro" id="IPR011705">
    <property type="entry name" value="BACK"/>
</dbReference>
<dbReference type="InterPro" id="IPR017096">
    <property type="entry name" value="BTB-kelch_protein"/>
</dbReference>
<dbReference type="InterPro" id="IPR000210">
    <property type="entry name" value="BTB/POZ_dom"/>
</dbReference>
<dbReference type="InterPro" id="IPR015915">
    <property type="entry name" value="Kelch-typ_b-propeller"/>
</dbReference>
<dbReference type="InterPro" id="IPR006652">
    <property type="entry name" value="Kelch_1"/>
</dbReference>
<dbReference type="InterPro" id="IPR030571">
    <property type="entry name" value="KLHL41_KL41B_BTB_POZ_dom"/>
</dbReference>
<dbReference type="InterPro" id="IPR011333">
    <property type="entry name" value="SKP1/BTB/POZ_sf"/>
</dbReference>
<dbReference type="PANTHER" id="PTHR24412">
    <property type="entry name" value="KELCH PROTEIN"/>
    <property type="match status" value="1"/>
</dbReference>
<dbReference type="PANTHER" id="PTHR24412:SF146">
    <property type="entry name" value="KELCH-LIKE PROTEIN 41"/>
    <property type="match status" value="1"/>
</dbReference>
<dbReference type="Pfam" id="PF07707">
    <property type="entry name" value="BACK"/>
    <property type="match status" value="1"/>
</dbReference>
<dbReference type="Pfam" id="PF00651">
    <property type="entry name" value="BTB"/>
    <property type="match status" value="1"/>
</dbReference>
<dbReference type="Pfam" id="PF24681">
    <property type="entry name" value="Kelch_KLHDC2_KLHL20_DRC7"/>
    <property type="match status" value="1"/>
</dbReference>
<dbReference type="PIRSF" id="PIRSF037037">
    <property type="entry name" value="Kelch-like_protein_gigaxonin"/>
    <property type="match status" value="1"/>
</dbReference>
<dbReference type="SMART" id="SM00875">
    <property type="entry name" value="BACK"/>
    <property type="match status" value="1"/>
</dbReference>
<dbReference type="SMART" id="SM00225">
    <property type="entry name" value="BTB"/>
    <property type="match status" value="1"/>
</dbReference>
<dbReference type="SMART" id="SM00612">
    <property type="entry name" value="Kelch"/>
    <property type="match status" value="4"/>
</dbReference>
<dbReference type="SUPFAM" id="SSF117281">
    <property type="entry name" value="Kelch motif"/>
    <property type="match status" value="1"/>
</dbReference>
<dbReference type="SUPFAM" id="SSF54695">
    <property type="entry name" value="POZ domain"/>
    <property type="match status" value="1"/>
</dbReference>
<dbReference type="PROSITE" id="PS50097">
    <property type="entry name" value="BTB"/>
    <property type="match status" value="1"/>
</dbReference>
<name>KLH41_RAT</name>
<gene>
    <name type="primary">Klhl41</name>
    <name type="synonym">Kbtbd10</name>
    <name type="synonym">Krp1</name>
</gene>
<feature type="chain" id="PRO_0000119089" description="Kelch-like protein 41">
    <location>
        <begin position="1"/>
        <end position="606"/>
    </location>
</feature>
<feature type="domain" description="BTB" evidence="4">
    <location>
        <begin position="33"/>
        <end position="100"/>
    </location>
</feature>
<feature type="domain" description="BACK">
    <location>
        <begin position="135"/>
        <end position="237"/>
    </location>
</feature>
<feature type="repeat" description="Kelch 1">
    <location>
        <begin position="346"/>
        <end position="398"/>
    </location>
</feature>
<feature type="repeat" description="Kelch 2">
    <location>
        <begin position="399"/>
        <end position="447"/>
    </location>
</feature>
<feature type="repeat" description="Kelch 3">
    <location>
        <begin position="448"/>
        <end position="495"/>
    </location>
</feature>
<feature type="repeat" description="Kelch 4">
    <location>
        <begin position="497"/>
        <end position="542"/>
    </location>
</feature>
<feature type="repeat" description="Kelch 5">
    <location>
        <begin position="544"/>
        <end position="599"/>
    </location>
</feature>
<feature type="modified residue" description="Phosphoserine" evidence="8">
    <location>
        <position position="3"/>
    </location>
</feature>
<feature type="strand" evidence="9">
    <location>
        <begin position="301"/>
        <end position="309"/>
    </location>
</feature>
<feature type="strand" evidence="9">
    <location>
        <begin position="311"/>
        <end position="318"/>
    </location>
</feature>
<feature type="turn" evidence="9">
    <location>
        <begin position="319"/>
        <end position="322"/>
    </location>
</feature>
<feature type="strand" evidence="9">
    <location>
        <begin position="323"/>
        <end position="329"/>
    </location>
</feature>
<feature type="strand" evidence="9">
    <location>
        <begin position="335"/>
        <end position="341"/>
    </location>
</feature>
<feature type="strand" evidence="9">
    <location>
        <begin position="343"/>
        <end position="345"/>
    </location>
</feature>
<feature type="strand" evidence="9">
    <location>
        <begin position="347"/>
        <end position="353"/>
    </location>
</feature>
<feature type="strand" evidence="9">
    <location>
        <begin position="366"/>
        <end position="372"/>
    </location>
</feature>
<feature type="turn" evidence="9">
    <location>
        <begin position="373"/>
        <end position="376"/>
    </location>
</feature>
<feature type="strand" evidence="9">
    <location>
        <begin position="377"/>
        <end position="380"/>
    </location>
</feature>
<feature type="strand" evidence="9">
    <location>
        <begin position="384"/>
        <end position="386"/>
    </location>
</feature>
<feature type="strand" evidence="9">
    <location>
        <begin position="392"/>
        <end position="396"/>
    </location>
</feature>
<feature type="strand" evidence="9">
    <location>
        <begin position="399"/>
        <end position="407"/>
    </location>
</feature>
<feature type="turn" evidence="9">
    <location>
        <begin position="408"/>
        <end position="410"/>
    </location>
</feature>
<feature type="strand" evidence="9">
    <location>
        <begin position="413"/>
        <end position="421"/>
    </location>
</feature>
<feature type="turn" evidence="9">
    <location>
        <begin position="422"/>
        <end position="425"/>
    </location>
</feature>
<feature type="strand" evidence="9">
    <location>
        <begin position="426"/>
        <end position="430"/>
    </location>
</feature>
<feature type="strand" evidence="9">
    <location>
        <begin position="437"/>
        <end position="439"/>
    </location>
</feature>
<feature type="strand" evidence="9">
    <location>
        <begin position="441"/>
        <end position="445"/>
    </location>
</feature>
<feature type="strand" evidence="9">
    <location>
        <begin position="448"/>
        <end position="452"/>
    </location>
</feature>
<feature type="strand" evidence="9">
    <location>
        <begin position="455"/>
        <end position="459"/>
    </location>
</feature>
<feature type="strand" evidence="9">
    <location>
        <begin position="465"/>
        <end position="468"/>
    </location>
</feature>
<feature type="turn" evidence="9">
    <location>
        <begin position="470"/>
        <end position="472"/>
    </location>
</feature>
<feature type="strand" evidence="9">
    <location>
        <begin position="475"/>
        <end position="478"/>
    </location>
</feature>
<feature type="strand" evidence="9">
    <location>
        <begin position="489"/>
        <end position="493"/>
    </location>
</feature>
<feature type="strand" evidence="9">
    <location>
        <begin position="496"/>
        <end position="504"/>
    </location>
</feature>
<feature type="strand" evidence="9">
    <location>
        <begin position="507"/>
        <end position="516"/>
    </location>
</feature>
<feature type="turn" evidence="9">
    <location>
        <begin position="517"/>
        <end position="519"/>
    </location>
</feature>
<feature type="strand" evidence="9">
    <location>
        <begin position="522"/>
        <end position="524"/>
    </location>
</feature>
<feature type="strand" evidence="9">
    <location>
        <begin position="536"/>
        <end position="540"/>
    </location>
</feature>
<feature type="strand" evidence="9">
    <location>
        <begin position="543"/>
        <end position="547"/>
    </location>
</feature>
<feature type="strand" evidence="9">
    <location>
        <begin position="568"/>
        <end position="572"/>
    </location>
</feature>
<feature type="turn" evidence="9">
    <location>
        <begin position="573"/>
        <end position="576"/>
    </location>
</feature>
<feature type="strand" evidence="9">
    <location>
        <begin position="577"/>
        <end position="583"/>
    </location>
</feature>
<feature type="helix" evidence="9">
    <location>
        <begin position="586"/>
        <end position="588"/>
    </location>
</feature>
<feature type="strand" evidence="9">
    <location>
        <begin position="592"/>
        <end position="599"/>
    </location>
</feature>
<feature type="helix" evidence="9">
    <location>
        <begin position="600"/>
        <end position="602"/>
    </location>
</feature>